<gene>
    <name evidence="1" type="primary">rpsK</name>
    <name type="ordered locus">Rsph17025_2511</name>
</gene>
<feature type="chain" id="PRO_1000051847" description="Small ribosomal subunit protein uS11">
    <location>
        <begin position="1"/>
        <end position="129"/>
    </location>
</feature>
<protein>
    <recommendedName>
        <fullName evidence="1">Small ribosomal subunit protein uS11</fullName>
    </recommendedName>
    <alternativeName>
        <fullName evidence="2">30S ribosomal protein S11</fullName>
    </alternativeName>
</protein>
<dbReference type="EMBL" id="CP000661">
    <property type="protein sequence ID" value="ABP71399.1"/>
    <property type="molecule type" value="Genomic_DNA"/>
</dbReference>
<dbReference type="SMR" id="A4WVI5"/>
<dbReference type="STRING" id="349102.Rsph17025_2511"/>
<dbReference type="KEGG" id="rsq:Rsph17025_2511"/>
<dbReference type="eggNOG" id="COG0100">
    <property type="taxonomic scope" value="Bacteria"/>
</dbReference>
<dbReference type="HOGENOM" id="CLU_072439_5_0_5"/>
<dbReference type="BioCyc" id="RSPH349102:G1G8M-2589-MONOMER"/>
<dbReference type="GO" id="GO:1990904">
    <property type="term" value="C:ribonucleoprotein complex"/>
    <property type="evidence" value="ECO:0007669"/>
    <property type="project" value="UniProtKB-KW"/>
</dbReference>
<dbReference type="GO" id="GO:0005840">
    <property type="term" value="C:ribosome"/>
    <property type="evidence" value="ECO:0007669"/>
    <property type="project" value="UniProtKB-KW"/>
</dbReference>
<dbReference type="GO" id="GO:0019843">
    <property type="term" value="F:rRNA binding"/>
    <property type="evidence" value="ECO:0007669"/>
    <property type="project" value="UniProtKB-UniRule"/>
</dbReference>
<dbReference type="GO" id="GO:0003735">
    <property type="term" value="F:structural constituent of ribosome"/>
    <property type="evidence" value="ECO:0007669"/>
    <property type="project" value="InterPro"/>
</dbReference>
<dbReference type="GO" id="GO:0006412">
    <property type="term" value="P:translation"/>
    <property type="evidence" value="ECO:0007669"/>
    <property type="project" value="UniProtKB-UniRule"/>
</dbReference>
<dbReference type="FunFam" id="3.30.420.80:FF:000001">
    <property type="entry name" value="30S ribosomal protein S11"/>
    <property type="match status" value="1"/>
</dbReference>
<dbReference type="Gene3D" id="3.30.420.80">
    <property type="entry name" value="Ribosomal protein S11"/>
    <property type="match status" value="1"/>
</dbReference>
<dbReference type="HAMAP" id="MF_01310">
    <property type="entry name" value="Ribosomal_uS11"/>
    <property type="match status" value="1"/>
</dbReference>
<dbReference type="InterPro" id="IPR001971">
    <property type="entry name" value="Ribosomal_uS11"/>
</dbReference>
<dbReference type="InterPro" id="IPR019981">
    <property type="entry name" value="Ribosomal_uS11_bac-type"/>
</dbReference>
<dbReference type="InterPro" id="IPR018102">
    <property type="entry name" value="Ribosomal_uS11_CS"/>
</dbReference>
<dbReference type="InterPro" id="IPR036967">
    <property type="entry name" value="Ribosomal_uS11_sf"/>
</dbReference>
<dbReference type="NCBIfam" id="NF003698">
    <property type="entry name" value="PRK05309.1"/>
    <property type="match status" value="1"/>
</dbReference>
<dbReference type="NCBIfam" id="TIGR03632">
    <property type="entry name" value="uS11_bact"/>
    <property type="match status" value="1"/>
</dbReference>
<dbReference type="PANTHER" id="PTHR11759">
    <property type="entry name" value="40S RIBOSOMAL PROTEIN S14/30S RIBOSOMAL PROTEIN S11"/>
    <property type="match status" value="1"/>
</dbReference>
<dbReference type="Pfam" id="PF00411">
    <property type="entry name" value="Ribosomal_S11"/>
    <property type="match status" value="1"/>
</dbReference>
<dbReference type="PIRSF" id="PIRSF002131">
    <property type="entry name" value="Ribosomal_S11"/>
    <property type="match status" value="1"/>
</dbReference>
<dbReference type="SUPFAM" id="SSF53137">
    <property type="entry name" value="Translational machinery components"/>
    <property type="match status" value="1"/>
</dbReference>
<dbReference type="PROSITE" id="PS00054">
    <property type="entry name" value="RIBOSOMAL_S11"/>
    <property type="match status" value="1"/>
</dbReference>
<sequence length="129" mass="13862">MARDKTRMKRKERKNIAAGVAHVNSSFNNTKILISDVQGNAISWSSAGTMGFKGSRKSTPYAAQMAAEDAAKKAQEHGMKTIEVEVQGPGSGRESALRALAAAGLNITSIRDVTPMAHNGCRPPKRRRV</sequence>
<keyword id="KW-0687">Ribonucleoprotein</keyword>
<keyword id="KW-0689">Ribosomal protein</keyword>
<keyword id="KW-0694">RNA-binding</keyword>
<keyword id="KW-0699">rRNA-binding</keyword>
<evidence type="ECO:0000255" key="1">
    <source>
        <dbReference type="HAMAP-Rule" id="MF_01310"/>
    </source>
</evidence>
<evidence type="ECO:0000305" key="2"/>
<comment type="function">
    <text evidence="1">Located on the platform of the 30S subunit, it bridges several disparate RNA helices of the 16S rRNA. Forms part of the Shine-Dalgarno cleft in the 70S ribosome.</text>
</comment>
<comment type="subunit">
    <text evidence="1">Part of the 30S ribosomal subunit. Interacts with proteins S7 and S18. Binds to IF-3.</text>
</comment>
<comment type="similarity">
    <text evidence="1">Belongs to the universal ribosomal protein uS11 family.</text>
</comment>
<reference key="1">
    <citation type="submission" date="2007-04" db="EMBL/GenBank/DDBJ databases">
        <title>Complete sequence of chromosome of Rhodobacter sphaeroides ATCC 17025.</title>
        <authorList>
            <consortium name="US DOE Joint Genome Institute"/>
            <person name="Copeland A."/>
            <person name="Lucas S."/>
            <person name="Lapidus A."/>
            <person name="Barry K."/>
            <person name="Detter J.C."/>
            <person name="Glavina del Rio T."/>
            <person name="Hammon N."/>
            <person name="Israni S."/>
            <person name="Dalin E."/>
            <person name="Tice H."/>
            <person name="Pitluck S."/>
            <person name="Chertkov O."/>
            <person name="Brettin T."/>
            <person name="Bruce D."/>
            <person name="Han C."/>
            <person name="Schmutz J."/>
            <person name="Larimer F."/>
            <person name="Land M."/>
            <person name="Hauser L."/>
            <person name="Kyrpides N."/>
            <person name="Kim E."/>
            <person name="Richardson P."/>
            <person name="Mackenzie C."/>
            <person name="Choudhary M."/>
            <person name="Donohue T.J."/>
            <person name="Kaplan S."/>
        </authorList>
    </citation>
    <scope>NUCLEOTIDE SEQUENCE [LARGE SCALE GENOMIC DNA]</scope>
    <source>
        <strain>ATCC 17025 / ATH 2.4.3</strain>
    </source>
</reference>
<name>RS11_CERS5</name>
<accession>A4WVI5</accession>
<organism>
    <name type="scientific">Cereibacter sphaeroides (strain ATCC 17025 / ATH 2.4.3)</name>
    <name type="common">Rhodobacter sphaeroides</name>
    <dbReference type="NCBI Taxonomy" id="349102"/>
    <lineage>
        <taxon>Bacteria</taxon>
        <taxon>Pseudomonadati</taxon>
        <taxon>Pseudomonadota</taxon>
        <taxon>Alphaproteobacteria</taxon>
        <taxon>Rhodobacterales</taxon>
        <taxon>Paracoccaceae</taxon>
        <taxon>Cereibacter</taxon>
    </lineage>
</organism>
<proteinExistence type="inferred from homology"/>